<sequence length="258" mass="29597">MLILISPAKTLDYQSPLTTTRYTLPELLDNAQQLIHEARKLTPPQISSLMRISDKLAGINAARFHDWQPNFTPENARQAILVFKGDVYTGLQAETFSEDDFDFAQQHLRMLSGLYGVLRPLDLMQPYRLEMGIRLENARGKDLYQFWGDIITNKLNEALAAQGDNVVINLASDEYFKSVKPKKLNAEIIKPVFLDEKNGKFKIISFYAKKARGLMSRFIIENRLTKPEQLTGFNSEGYFFDEASSSNGELVFKRYEQR</sequence>
<proteinExistence type="inferred from homology"/>
<name>YAAA_ECOK1</name>
<reference key="1">
    <citation type="journal article" date="2007" name="J. Bacteriol.">
        <title>The genome sequence of avian pathogenic Escherichia coli strain O1:K1:H7 shares strong similarities with human extraintestinal pathogenic E. coli genomes.</title>
        <authorList>
            <person name="Johnson T.J."/>
            <person name="Kariyawasam S."/>
            <person name="Wannemuehler Y."/>
            <person name="Mangiamele P."/>
            <person name="Johnson S.J."/>
            <person name="Doetkott C."/>
            <person name="Skyberg J.A."/>
            <person name="Lynne A.M."/>
            <person name="Johnson J.R."/>
            <person name="Nolan L.K."/>
        </authorList>
    </citation>
    <scope>NUCLEOTIDE SEQUENCE [LARGE SCALE GENOMIC DNA]</scope>
</reference>
<dbReference type="EMBL" id="CP000468">
    <property type="protein sequence ID" value="ABI99498.1"/>
    <property type="molecule type" value="Genomic_DNA"/>
</dbReference>
<dbReference type="RefSeq" id="WP_000906189.1">
    <property type="nucleotide sequence ID" value="NZ_CADILS010000013.1"/>
</dbReference>
<dbReference type="SMR" id="A1A759"/>
<dbReference type="KEGG" id="ecv:APECO1_1972"/>
<dbReference type="HOGENOM" id="CLU_061989_0_0_6"/>
<dbReference type="Proteomes" id="UP000008216">
    <property type="component" value="Chromosome"/>
</dbReference>
<dbReference type="GO" id="GO:0005829">
    <property type="term" value="C:cytosol"/>
    <property type="evidence" value="ECO:0007669"/>
    <property type="project" value="TreeGrafter"/>
</dbReference>
<dbReference type="GO" id="GO:0033194">
    <property type="term" value="P:response to hydroperoxide"/>
    <property type="evidence" value="ECO:0007669"/>
    <property type="project" value="TreeGrafter"/>
</dbReference>
<dbReference type="HAMAP" id="MF_00652">
    <property type="entry name" value="UPF0246"/>
    <property type="match status" value="1"/>
</dbReference>
<dbReference type="InterPro" id="IPR005583">
    <property type="entry name" value="YaaA"/>
</dbReference>
<dbReference type="NCBIfam" id="NF002541">
    <property type="entry name" value="PRK02101.1-1"/>
    <property type="match status" value="1"/>
</dbReference>
<dbReference type="NCBIfam" id="NF002542">
    <property type="entry name" value="PRK02101.1-3"/>
    <property type="match status" value="1"/>
</dbReference>
<dbReference type="PANTHER" id="PTHR30283:SF4">
    <property type="entry name" value="PEROXIDE STRESS RESISTANCE PROTEIN YAAA"/>
    <property type="match status" value="1"/>
</dbReference>
<dbReference type="PANTHER" id="PTHR30283">
    <property type="entry name" value="PEROXIDE STRESS RESPONSE PROTEIN YAAA"/>
    <property type="match status" value="1"/>
</dbReference>
<dbReference type="Pfam" id="PF03883">
    <property type="entry name" value="H2O2_YaaD"/>
    <property type="match status" value="1"/>
</dbReference>
<accession>A1A759</accession>
<feature type="chain" id="PRO_1000061599" description="UPF0246 protein YaaA">
    <location>
        <begin position="1"/>
        <end position="258"/>
    </location>
</feature>
<protein>
    <recommendedName>
        <fullName evidence="1">UPF0246 protein YaaA</fullName>
    </recommendedName>
</protein>
<gene>
    <name evidence="1" type="primary">yaaA</name>
    <name type="ordered locus">Ecok1_00050</name>
    <name type="ORF">APECO1_1972</name>
</gene>
<evidence type="ECO:0000255" key="1">
    <source>
        <dbReference type="HAMAP-Rule" id="MF_00652"/>
    </source>
</evidence>
<keyword id="KW-1185">Reference proteome</keyword>
<organism>
    <name type="scientific">Escherichia coli O1:K1 / APEC</name>
    <dbReference type="NCBI Taxonomy" id="405955"/>
    <lineage>
        <taxon>Bacteria</taxon>
        <taxon>Pseudomonadati</taxon>
        <taxon>Pseudomonadota</taxon>
        <taxon>Gammaproteobacteria</taxon>
        <taxon>Enterobacterales</taxon>
        <taxon>Enterobacteriaceae</taxon>
        <taxon>Escherichia</taxon>
    </lineage>
</organism>
<comment type="similarity">
    <text evidence="1">Belongs to the UPF0246 family.</text>
</comment>